<proteinExistence type="inferred from homology"/>
<feature type="chain" id="PRO_0000428253" description="Small ribosomal subunit protein bS20">
    <location>
        <begin position="1"/>
        <end position="86"/>
    </location>
</feature>
<feature type="region of interest" description="Disordered" evidence="2">
    <location>
        <begin position="1"/>
        <end position="25"/>
    </location>
</feature>
<reference key="1">
    <citation type="journal article" date="2002" name="J. Bacteriol.">
        <title>Whole-genome comparison of Mycobacterium tuberculosis clinical and laboratory strains.</title>
        <authorList>
            <person name="Fleischmann R.D."/>
            <person name="Alland D."/>
            <person name="Eisen J.A."/>
            <person name="Carpenter L."/>
            <person name="White O."/>
            <person name="Peterson J.D."/>
            <person name="DeBoy R.T."/>
            <person name="Dodson R.J."/>
            <person name="Gwinn M.L."/>
            <person name="Haft D.H."/>
            <person name="Hickey E.K."/>
            <person name="Kolonay J.F."/>
            <person name="Nelson W.C."/>
            <person name="Umayam L.A."/>
            <person name="Ermolaeva M.D."/>
            <person name="Salzberg S.L."/>
            <person name="Delcher A."/>
            <person name="Utterback T.R."/>
            <person name="Weidman J.F."/>
            <person name="Khouri H.M."/>
            <person name="Gill J."/>
            <person name="Mikula A."/>
            <person name="Bishai W."/>
            <person name="Jacobs W.R. Jr."/>
            <person name="Venter J.C."/>
            <person name="Fraser C.M."/>
        </authorList>
    </citation>
    <scope>NUCLEOTIDE SEQUENCE [LARGE SCALE GENOMIC DNA]</scope>
    <source>
        <strain>CDC 1551 / Oshkosh</strain>
    </source>
</reference>
<keyword id="KW-1185">Reference proteome</keyword>
<keyword id="KW-0687">Ribonucleoprotein</keyword>
<keyword id="KW-0689">Ribosomal protein</keyword>
<keyword id="KW-0694">RNA-binding</keyword>
<keyword id="KW-0699">rRNA-binding</keyword>
<accession>P9WH40</accession>
<accession>L0TB53</accession>
<accession>P66505</accession>
<accession>P71731</accession>
<gene>
    <name evidence="1" type="primary">rpsT</name>
    <name type="ordered locus">MT2485</name>
</gene>
<dbReference type="EMBL" id="AE000516">
    <property type="protein sequence ID" value="AAK46781.1"/>
    <property type="molecule type" value="Genomic_DNA"/>
</dbReference>
<dbReference type="PIR" id="G70684">
    <property type="entry name" value="G70684"/>
</dbReference>
<dbReference type="RefSeq" id="WP_003899314.1">
    <property type="nucleotide sequence ID" value="NZ_KK341227.1"/>
</dbReference>
<dbReference type="SMR" id="P9WH40"/>
<dbReference type="KEGG" id="mtc:MT2485"/>
<dbReference type="PATRIC" id="fig|83331.31.peg.2678"/>
<dbReference type="HOGENOM" id="CLU_160655_0_1_11"/>
<dbReference type="Proteomes" id="UP000001020">
    <property type="component" value="Chromosome"/>
</dbReference>
<dbReference type="GO" id="GO:0005829">
    <property type="term" value="C:cytosol"/>
    <property type="evidence" value="ECO:0007669"/>
    <property type="project" value="TreeGrafter"/>
</dbReference>
<dbReference type="GO" id="GO:0015935">
    <property type="term" value="C:small ribosomal subunit"/>
    <property type="evidence" value="ECO:0007669"/>
    <property type="project" value="TreeGrafter"/>
</dbReference>
<dbReference type="GO" id="GO:0070181">
    <property type="term" value="F:small ribosomal subunit rRNA binding"/>
    <property type="evidence" value="ECO:0007669"/>
    <property type="project" value="TreeGrafter"/>
</dbReference>
<dbReference type="GO" id="GO:0003735">
    <property type="term" value="F:structural constituent of ribosome"/>
    <property type="evidence" value="ECO:0007669"/>
    <property type="project" value="InterPro"/>
</dbReference>
<dbReference type="GO" id="GO:0006412">
    <property type="term" value="P:translation"/>
    <property type="evidence" value="ECO:0007669"/>
    <property type="project" value="UniProtKB-UniRule"/>
</dbReference>
<dbReference type="FunFam" id="1.20.58.110:FF:000001">
    <property type="entry name" value="30S ribosomal protein S20"/>
    <property type="match status" value="1"/>
</dbReference>
<dbReference type="Gene3D" id="1.20.58.110">
    <property type="entry name" value="Ribosomal protein S20"/>
    <property type="match status" value="1"/>
</dbReference>
<dbReference type="HAMAP" id="MF_00500">
    <property type="entry name" value="Ribosomal_bS20"/>
    <property type="match status" value="1"/>
</dbReference>
<dbReference type="InterPro" id="IPR002583">
    <property type="entry name" value="Ribosomal_bS20"/>
</dbReference>
<dbReference type="InterPro" id="IPR036510">
    <property type="entry name" value="Ribosomal_bS20_sf"/>
</dbReference>
<dbReference type="NCBIfam" id="TIGR00029">
    <property type="entry name" value="S20"/>
    <property type="match status" value="1"/>
</dbReference>
<dbReference type="PANTHER" id="PTHR33398">
    <property type="entry name" value="30S RIBOSOMAL PROTEIN S20"/>
    <property type="match status" value="1"/>
</dbReference>
<dbReference type="PANTHER" id="PTHR33398:SF1">
    <property type="entry name" value="SMALL RIBOSOMAL SUBUNIT PROTEIN BS20C"/>
    <property type="match status" value="1"/>
</dbReference>
<dbReference type="Pfam" id="PF01649">
    <property type="entry name" value="Ribosomal_S20p"/>
    <property type="match status" value="1"/>
</dbReference>
<dbReference type="SUPFAM" id="SSF46992">
    <property type="entry name" value="Ribosomal protein S20"/>
    <property type="match status" value="1"/>
</dbReference>
<sequence>MANIKSQQKRNRTNERARLRNKAVKSSLRTAVRAFREAAHAGDKAKAAELLASTNRKLDKAASKGVIHKNQAANKKSALAQALNKL</sequence>
<evidence type="ECO:0000255" key="1">
    <source>
        <dbReference type="HAMAP-Rule" id="MF_00500"/>
    </source>
</evidence>
<evidence type="ECO:0000256" key="2">
    <source>
        <dbReference type="SAM" id="MobiDB-lite"/>
    </source>
</evidence>
<evidence type="ECO:0000305" key="3"/>
<name>RS20_MYCTO</name>
<comment type="function">
    <text evidence="1">Binds directly to 16S ribosomal RNA.</text>
</comment>
<comment type="similarity">
    <text evidence="1">Belongs to the bacterial ribosomal protein bS20 family.</text>
</comment>
<protein>
    <recommendedName>
        <fullName evidence="1">Small ribosomal subunit protein bS20</fullName>
    </recommendedName>
    <alternativeName>
        <fullName evidence="3">30S ribosomal protein S20</fullName>
    </alternativeName>
</protein>
<organism>
    <name type="scientific">Mycobacterium tuberculosis (strain CDC 1551 / Oshkosh)</name>
    <dbReference type="NCBI Taxonomy" id="83331"/>
    <lineage>
        <taxon>Bacteria</taxon>
        <taxon>Bacillati</taxon>
        <taxon>Actinomycetota</taxon>
        <taxon>Actinomycetes</taxon>
        <taxon>Mycobacteriales</taxon>
        <taxon>Mycobacteriaceae</taxon>
        <taxon>Mycobacterium</taxon>
        <taxon>Mycobacterium tuberculosis complex</taxon>
    </lineage>
</organism>